<organism>
    <name type="scientific">Cyanidium caldarium</name>
    <name type="common">Red alga</name>
    <dbReference type="NCBI Taxonomy" id="2771"/>
    <lineage>
        <taxon>Eukaryota</taxon>
        <taxon>Rhodophyta</taxon>
        <taxon>Bangiophyceae</taxon>
        <taxon>Cyanidiales</taxon>
        <taxon>Cyanidiaceae</taxon>
        <taxon>Cyanidium</taxon>
    </lineage>
</organism>
<evidence type="ECO:0000255" key="1">
    <source>
        <dbReference type="HAMAP-Rule" id="MF_01399"/>
    </source>
</evidence>
<name>ATPF2_CYACA</name>
<feature type="chain" id="PRO_0000082433" description="ATP synthase subunit b', chloroplastic">
    <location>
        <begin position="1"/>
        <end position="157"/>
    </location>
</feature>
<feature type="transmembrane region" description="Helical" evidence="1">
    <location>
        <begin position="26"/>
        <end position="43"/>
    </location>
</feature>
<gene>
    <name evidence="1" type="primary">atpF2</name>
    <name evidence="1" type="synonym">atpG</name>
</gene>
<geneLocation type="chloroplast"/>
<keyword id="KW-0066">ATP synthesis</keyword>
<keyword id="KW-0067">ATP-binding</keyword>
<keyword id="KW-0138">CF(0)</keyword>
<keyword id="KW-0150">Chloroplast</keyword>
<keyword id="KW-0375">Hydrogen ion transport</keyword>
<keyword id="KW-0406">Ion transport</keyword>
<keyword id="KW-0472">Membrane</keyword>
<keyword id="KW-0547">Nucleotide-binding</keyword>
<keyword id="KW-0934">Plastid</keyword>
<keyword id="KW-0793">Thylakoid</keyword>
<keyword id="KW-0812">Transmembrane</keyword>
<keyword id="KW-1133">Transmembrane helix</keyword>
<keyword id="KW-0813">Transport</keyword>
<proteinExistence type="inferred from homology"/>
<reference key="1">
    <citation type="journal article" date="2000" name="J. Mol. Evol.">
        <title>The structure and gene repertoire of an ancient red algal plastid genome.</title>
        <authorList>
            <person name="Gloeckner G."/>
            <person name="Rosenthal A."/>
            <person name="Valentin K.-U."/>
        </authorList>
    </citation>
    <scope>NUCLEOTIDE SEQUENCE [LARGE SCALE GENOMIC DNA]</scope>
    <source>
        <strain>RK-1</strain>
    </source>
</reference>
<protein>
    <recommendedName>
        <fullName evidence="1">ATP synthase subunit b', chloroplastic</fullName>
    </recommendedName>
    <alternativeName>
        <fullName evidence="1">ATP synthase F(0) sector subunit b'</fullName>
    </alternativeName>
    <alternativeName>
        <fullName evidence="1">ATPase subunit II</fullName>
    </alternativeName>
</protein>
<sequence length="157" mass="18351">MQDILNIYLSSEESGGLFDFDATLPLMASQFLLIMLILDITFYKPINKVLKDRENYILKTLESATQISEKTKETLARYEEVILKSKKESQQLIDSIKTKTEHDIVNELIQTQNSTREFISKSIKELYRKKEQTLKVLEEDTENLSDKIYLKLINPKQ</sequence>
<accession>Q9TM29</accession>
<comment type="function">
    <text evidence="1">F(1)F(0) ATP synthase produces ATP from ADP in the presence of a proton or sodium gradient. F-type ATPases consist of two structural domains, F(1) containing the extramembraneous catalytic core and F(0) containing the membrane proton channel, linked together by a central stalk and a peripheral stalk. During catalysis, ATP synthesis in the catalytic domain of F(1) is coupled via a rotary mechanism of the central stalk subunits to proton translocation.</text>
</comment>
<comment type="function">
    <text evidence="1">Component of the F(0) channel, it forms part of the peripheral stalk, linking F(1) to F(0). The b'-subunit is a diverged and duplicated form of b found in plants and photosynthetic bacteria.</text>
</comment>
<comment type="subunit">
    <text evidence="1">F-type ATPases have 2 components, F(1) - the catalytic core - and F(0) - the membrane proton channel. F(1) has five subunits: alpha(3), beta(3), gamma(1), delta(1), epsilon(1). F(0) has four main subunits: a(1), b(1), b'(1) and c(10-14). The alpha and beta chains form an alternating ring which encloses part of the gamma chain. F(1) is attached to F(0) by a central stalk formed by the gamma and epsilon chains, while a peripheral stalk is formed by the delta, b and b' chains.</text>
</comment>
<comment type="subcellular location">
    <subcellularLocation>
        <location evidence="1">Plastid</location>
        <location evidence="1">Chloroplast thylakoid membrane</location>
        <topology evidence="1">Single-pass membrane protein</topology>
    </subcellularLocation>
</comment>
<comment type="miscellaneous">
    <text>In plastids the F-type ATPase is also known as CF(1)CF(0).</text>
</comment>
<comment type="similarity">
    <text evidence="1">Belongs to the ATPase B chain family.</text>
</comment>
<dbReference type="EMBL" id="AF022186">
    <property type="protein sequence ID" value="AAF13008.1"/>
    <property type="molecule type" value="Genomic_DNA"/>
</dbReference>
<dbReference type="RefSeq" id="NP_045038.1">
    <property type="nucleotide sequence ID" value="NC_001840.1"/>
</dbReference>
<dbReference type="SMR" id="Q9TM29"/>
<dbReference type="GeneID" id="800204"/>
<dbReference type="GO" id="GO:0009535">
    <property type="term" value="C:chloroplast thylakoid membrane"/>
    <property type="evidence" value="ECO:0007669"/>
    <property type="project" value="UniProtKB-SubCell"/>
</dbReference>
<dbReference type="GO" id="GO:0045259">
    <property type="term" value="C:proton-transporting ATP synthase complex"/>
    <property type="evidence" value="ECO:0007669"/>
    <property type="project" value="UniProtKB-KW"/>
</dbReference>
<dbReference type="GO" id="GO:0005524">
    <property type="term" value="F:ATP binding"/>
    <property type="evidence" value="ECO:0007669"/>
    <property type="project" value="UniProtKB-KW"/>
</dbReference>
<dbReference type="GO" id="GO:0046933">
    <property type="term" value="F:proton-transporting ATP synthase activity, rotational mechanism"/>
    <property type="evidence" value="ECO:0007669"/>
    <property type="project" value="UniProtKB-UniRule"/>
</dbReference>
<dbReference type="GO" id="GO:0046961">
    <property type="term" value="F:proton-transporting ATPase activity, rotational mechanism"/>
    <property type="evidence" value="ECO:0007669"/>
    <property type="project" value="TreeGrafter"/>
</dbReference>
<dbReference type="CDD" id="cd06503">
    <property type="entry name" value="ATP-synt_Fo_b"/>
    <property type="match status" value="1"/>
</dbReference>
<dbReference type="HAMAP" id="MF_01398">
    <property type="entry name" value="ATP_synth_b_bprime"/>
    <property type="match status" value="1"/>
</dbReference>
<dbReference type="HAMAP" id="MF_01399">
    <property type="entry name" value="ATP_synth_bprime"/>
    <property type="match status" value="1"/>
</dbReference>
<dbReference type="InterPro" id="IPR034679">
    <property type="entry name" value="ATP_synth_b"/>
</dbReference>
<dbReference type="InterPro" id="IPR002146">
    <property type="entry name" value="ATP_synth_b/b'su_bac/chlpt"/>
</dbReference>
<dbReference type="InterPro" id="IPR050059">
    <property type="entry name" value="ATP_synthase_B_chain"/>
</dbReference>
<dbReference type="PANTHER" id="PTHR33445">
    <property type="entry name" value="ATP SYNTHASE SUBUNIT B', CHLOROPLASTIC"/>
    <property type="match status" value="1"/>
</dbReference>
<dbReference type="PANTHER" id="PTHR33445:SF2">
    <property type="entry name" value="ATP SYNTHASE SUBUNIT B', CHLOROPLASTIC"/>
    <property type="match status" value="1"/>
</dbReference>
<dbReference type="Pfam" id="PF00430">
    <property type="entry name" value="ATP-synt_B"/>
    <property type="match status" value="1"/>
</dbReference>